<protein>
    <recommendedName>
        <fullName>ATP-dependent RNA helicase dbp2</fullName>
        <ecNumber>3.6.4.13</ecNumber>
    </recommendedName>
</protein>
<gene>
    <name type="primary">dbp2</name>
    <name type="ORF">NFIA_086090</name>
</gene>
<name>DBP2_NEOFI</name>
<comment type="function">
    <text evidence="1">ATP-dependent RNA helicase involved nonsense-mediated mRNA decay and ribosome biogenesis through rRNA processing.</text>
</comment>
<comment type="catalytic activity">
    <reaction>
        <text>ATP + H2O = ADP + phosphate + H(+)</text>
        <dbReference type="Rhea" id="RHEA:13065"/>
        <dbReference type="ChEBI" id="CHEBI:15377"/>
        <dbReference type="ChEBI" id="CHEBI:15378"/>
        <dbReference type="ChEBI" id="CHEBI:30616"/>
        <dbReference type="ChEBI" id="CHEBI:43474"/>
        <dbReference type="ChEBI" id="CHEBI:456216"/>
        <dbReference type="EC" id="3.6.4.13"/>
    </reaction>
</comment>
<comment type="subunit">
    <text evidence="1">Associates with polysomes.</text>
</comment>
<comment type="subcellular location">
    <subcellularLocation>
        <location evidence="1">Cytoplasm</location>
    </subcellularLocation>
    <subcellularLocation>
        <location evidence="1">Nucleus</location>
    </subcellularLocation>
</comment>
<comment type="domain">
    <text>The Q motif is unique to and characteristic of the DEAD box family of RNA helicases and controls ATP binding and hydrolysis.</text>
</comment>
<comment type="similarity">
    <text evidence="5">Belongs to the DEAD box helicase family. DDX5/DBP2 subfamily.</text>
</comment>
<keyword id="KW-0067">ATP-binding</keyword>
<keyword id="KW-0963">Cytoplasm</keyword>
<keyword id="KW-0347">Helicase</keyword>
<keyword id="KW-0378">Hydrolase</keyword>
<keyword id="KW-0866">Nonsense-mediated mRNA decay</keyword>
<keyword id="KW-0547">Nucleotide-binding</keyword>
<keyword id="KW-0539">Nucleus</keyword>
<keyword id="KW-1185">Reference proteome</keyword>
<keyword id="KW-0690">Ribosome biogenesis</keyword>
<keyword id="KW-0694">RNA-binding</keyword>
<keyword id="KW-0698">rRNA processing</keyword>
<feature type="chain" id="PRO_0000281694" description="ATP-dependent RNA helicase dbp2">
    <location>
        <begin position="1"/>
        <end position="545"/>
    </location>
</feature>
<feature type="domain" description="Helicase ATP-binding" evidence="2">
    <location>
        <begin position="150"/>
        <end position="325"/>
    </location>
</feature>
<feature type="domain" description="Helicase C-terminal" evidence="3">
    <location>
        <begin position="353"/>
        <end position="500"/>
    </location>
</feature>
<feature type="region of interest" description="Disordered" evidence="4">
    <location>
        <begin position="1"/>
        <end position="39"/>
    </location>
</feature>
<feature type="region of interest" description="Disordered" evidence="4">
    <location>
        <begin position="513"/>
        <end position="545"/>
    </location>
</feature>
<feature type="short sequence motif" description="Q motif">
    <location>
        <begin position="119"/>
        <end position="147"/>
    </location>
</feature>
<feature type="short sequence motif" description="DEAD box">
    <location>
        <begin position="273"/>
        <end position="276"/>
    </location>
</feature>
<feature type="compositionally biased region" description="Basic and acidic residues" evidence="4">
    <location>
        <begin position="10"/>
        <end position="23"/>
    </location>
</feature>
<feature type="compositionally biased region" description="Gly residues" evidence="4">
    <location>
        <begin position="24"/>
        <end position="39"/>
    </location>
</feature>
<feature type="compositionally biased region" description="Gly residues" evidence="4">
    <location>
        <begin position="513"/>
        <end position="529"/>
    </location>
</feature>
<feature type="binding site" evidence="2">
    <location>
        <begin position="163"/>
        <end position="170"/>
    </location>
    <ligand>
        <name>ATP</name>
        <dbReference type="ChEBI" id="CHEBI:30616"/>
    </ligand>
</feature>
<proteinExistence type="inferred from homology"/>
<dbReference type="EC" id="3.6.4.13"/>
<dbReference type="EMBL" id="DS027696">
    <property type="protein sequence ID" value="EAW18654.1"/>
    <property type="molecule type" value="Genomic_DNA"/>
</dbReference>
<dbReference type="RefSeq" id="XP_001260551.1">
    <property type="nucleotide sequence ID" value="XM_001260550.1"/>
</dbReference>
<dbReference type="SMR" id="A1DGZ7"/>
<dbReference type="STRING" id="331117.A1DGZ7"/>
<dbReference type="EnsemblFungi" id="EAW18654">
    <property type="protein sequence ID" value="EAW18654"/>
    <property type="gene ID" value="NFIA_086090"/>
</dbReference>
<dbReference type="GeneID" id="4587109"/>
<dbReference type="KEGG" id="nfi:NFIA_086090"/>
<dbReference type="VEuPathDB" id="FungiDB:NFIA_086090"/>
<dbReference type="eggNOG" id="KOG0331">
    <property type="taxonomic scope" value="Eukaryota"/>
</dbReference>
<dbReference type="HOGENOM" id="CLU_003041_16_9_1"/>
<dbReference type="OMA" id="STMPKFE"/>
<dbReference type="OrthoDB" id="196131at2759"/>
<dbReference type="Proteomes" id="UP000006702">
    <property type="component" value="Unassembled WGS sequence"/>
</dbReference>
<dbReference type="GO" id="GO:0005737">
    <property type="term" value="C:cytoplasm"/>
    <property type="evidence" value="ECO:0007669"/>
    <property type="project" value="UniProtKB-SubCell"/>
</dbReference>
<dbReference type="GO" id="GO:0005634">
    <property type="term" value="C:nucleus"/>
    <property type="evidence" value="ECO:0007669"/>
    <property type="project" value="UniProtKB-SubCell"/>
</dbReference>
<dbReference type="GO" id="GO:0005524">
    <property type="term" value="F:ATP binding"/>
    <property type="evidence" value="ECO:0007669"/>
    <property type="project" value="UniProtKB-KW"/>
</dbReference>
<dbReference type="GO" id="GO:0016887">
    <property type="term" value="F:ATP hydrolysis activity"/>
    <property type="evidence" value="ECO:0007669"/>
    <property type="project" value="RHEA"/>
</dbReference>
<dbReference type="GO" id="GO:0003723">
    <property type="term" value="F:RNA binding"/>
    <property type="evidence" value="ECO:0007669"/>
    <property type="project" value="UniProtKB-KW"/>
</dbReference>
<dbReference type="GO" id="GO:0003724">
    <property type="term" value="F:RNA helicase activity"/>
    <property type="evidence" value="ECO:0007669"/>
    <property type="project" value="UniProtKB-EC"/>
</dbReference>
<dbReference type="GO" id="GO:0000184">
    <property type="term" value="P:nuclear-transcribed mRNA catabolic process, nonsense-mediated decay"/>
    <property type="evidence" value="ECO:0007669"/>
    <property type="project" value="UniProtKB-KW"/>
</dbReference>
<dbReference type="GO" id="GO:0006364">
    <property type="term" value="P:rRNA processing"/>
    <property type="evidence" value="ECO:0007669"/>
    <property type="project" value="UniProtKB-KW"/>
</dbReference>
<dbReference type="CDD" id="cd18787">
    <property type="entry name" value="SF2_C_DEAD"/>
    <property type="match status" value="1"/>
</dbReference>
<dbReference type="FunFam" id="3.40.50.300:FF:000008">
    <property type="entry name" value="ATP-dependent RNA helicase RhlB"/>
    <property type="match status" value="1"/>
</dbReference>
<dbReference type="FunFam" id="3.40.50.300:FF:000079">
    <property type="entry name" value="probable ATP-dependent RNA helicase DDX17"/>
    <property type="match status" value="1"/>
</dbReference>
<dbReference type="Gene3D" id="3.40.50.300">
    <property type="entry name" value="P-loop containing nucleotide triphosphate hydrolases"/>
    <property type="match status" value="2"/>
</dbReference>
<dbReference type="InterPro" id="IPR011545">
    <property type="entry name" value="DEAD/DEAH_box_helicase_dom"/>
</dbReference>
<dbReference type="InterPro" id="IPR014001">
    <property type="entry name" value="Helicase_ATP-bd"/>
</dbReference>
<dbReference type="InterPro" id="IPR001650">
    <property type="entry name" value="Helicase_C-like"/>
</dbReference>
<dbReference type="InterPro" id="IPR027417">
    <property type="entry name" value="P-loop_NTPase"/>
</dbReference>
<dbReference type="InterPro" id="IPR000629">
    <property type="entry name" value="RNA-helicase_DEAD-box_CS"/>
</dbReference>
<dbReference type="InterPro" id="IPR014014">
    <property type="entry name" value="RNA_helicase_DEAD_Q_motif"/>
</dbReference>
<dbReference type="PANTHER" id="PTHR47958">
    <property type="entry name" value="ATP-DEPENDENT RNA HELICASE DBP3"/>
    <property type="match status" value="1"/>
</dbReference>
<dbReference type="Pfam" id="PF00270">
    <property type="entry name" value="DEAD"/>
    <property type="match status" value="1"/>
</dbReference>
<dbReference type="Pfam" id="PF00271">
    <property type="entry name" value="Helicase_C"/>
    <property type="match status" value="1"/>
</dbReference>
<dbReference type="SMART" id="SM00487">
    <property type="entry name" value="DEXDc"/>
    <property type="match status" value="1"/>
</dbReference>
<dbReference type="SMART" id="SM00490">
    <property type="entry name" value="HELICc"/>
    <property type="match status" value="1"/>
</dbReference>
<dbReference type="SUPFAM" id="SSF52540">
    <property type="entry name" value="P-loop containing nucleoside triphosphate hydrolases"/>
    <property type="match status" value="1"/>
</dbReference>
<dbReference type="PROSITE" id="PS00039">
    <property type="entry name" value="DEAD_ATP_HELICASE"/>
    <property type="match status" value="1"/>
</dbReference>
<dbReference type="PROSITE" id="PS51192">
    <property type="entry name" value="HELICASE_ATP_BIND_1"/>
    <property type="match status" value="1"/>
</dbReference>
<dbReference type="PROSITE" id="PS51194">
    <property type="entry name" value="HELICASE_CTER"/>
    <property type="match status" value="1"/>
</dbReference>
<dbReference type="PROSITE" id="PS51195">
    <property type="entry name" value="Q_MOTIF"/>
    <property type="match status" value="1"/>
</dbReference>
<accession>A1DGZ7</accession>
<organism>
    <name type="scientific">Neosartorya fischeri (strain ATCC 1020 / DSM 3700 / CBS 544.65 / FGSC A1164 / JCM 1740 / NRRL 181 / WB 181)</name>
    <name type="common">Aspergillus fischerianus</name>
    <dbReference type="NCBI Taxonomy" id="331117"/>
    <lineage>
        <taxon>Eukaryota</taxon>
        <taxon>Fungi</taxon>
        <taxon>Dikarya</taxon>
        <taxon>Ascomycota</taxon>
        <taxon>Pezizomycotina</taxon>
        <taxon>Eurotiomycetes</taxon>
        <taxon>Eurotiomycetidae</taxon>
        <taxon>Eurotiales</taxon>
        <taxon>Aspergillaceae</taxon>
        <taxon>Aspergillus</taxon>
        <taxon>Aspergillus subgen. Fumigati</taxon>
    </lineage>
</organism>
<sequence>MSSYGGGYQRESRGDSYRSRGGHDGGYQNGNGYSGGGGYGGGYGNGYGRGGGAAGGDRMSNLGAGLKKQDWDLDTLPKFEKSFYKEHPDVAARSEREVEEFRKKHEMTVQGRNVPRPVENFDEAGFPQYVLSEVKAQGFERPTAIQSQGWPMALSGRDVVGIAETGSGKTLTYCLPAIVHINAQPLLAPGDGPIVLILAPTRELAVQIQTEISKFGKSSRIRNTCVYGGVPKGPQIRDLSRGVEVCIATPGRLIDMLEAGRTNLRRVTYLVLDEADRMLDMGFEPQIRKIISQIRPDRQTCMWSATWPKEVRQLATDFLNDYIQVNIGSMDLSANHRITQIVEVVSDFEKRDKMIKHLEKIMENRGNKCLIFTGTKRIADEITRFLRQDGWPALSIHGDKQQQERDWVLNEFKTGKSPIMVATDVASRGIDVRDITHVLNYDYPNNSEDYIHRIGRTGRAGAKGTAITFFTTENSKQARDLVTILTEAKQQIDPRLAEMVRYSGGGGGHGGYGRWGGRGGRGGGRGRGGSYTASNAAPLGNARRW</sequence>
<evidence type="ECO:0000250" key="1"/>
<evidence type="ECO:0000255" key="2">
    <source>
        <dbReference type="PROSITE-ProRule" id="PRU00541"/>
    </source>
</evidence>
<evidence type="ECO:0000255" key="3">
    <source>
        <dbReference type="PROSITE-ProRule" id="PRU00542"/>
    </source>
</evidence>
<evidence type="ECO:0000256" key="4">
    <source>
        <dbReference type="SAM" id="MobiDB-lite"/>
    </source>
</evidence>
<evidence type="ECO:0000305" key="5"/>
<reference key="1">
    <citation type="journal article" date="2008" name="PLoS Genet.">
        <title>Genomic islands in the pathogenic filamentous fungus Aspergillus fumigatus.</title>
        <authorList>
            <person name="Fedorova N.D."/>
            <person name="Khaldi N."/>
            <person name="Joardar V.S."/>
            <person name="Maiti R."/>
            <person name="Amedeo P."/>
            <person name="Anderson M.J."/>
            <person name="Crabtree J."/>
            <person name="Silva J.C."/>
            <person name="Badger J.H."/>
            <person name="Albarraq A."/>
            <person name="Angiuoli S."/>
            <person name="Bussey H."/>
            <person name="Bowyer P."/>
            <person name="Cotty P.J."/>
            <person name="Dyer P.S."/>
            <person name="Egan A."/>
            <person name="Galens K."/>
            <person name="Fraser-Liggett C.M."/>
            <person name="Haas B.J."/>
            <person name="Inman J.M."/>
            <person name="Kent R."/>
            <person name="Lemieux S."/>
            <person name="Malavazi I."/>
            <person name="Orvis J."/>
            <person name="Roemer T."/>
            <person name="Ronning C.M."/>
            <person name="Sundaram J.P."/>
            <person name="Sutton G."/>
            <person name="Turner G."/>
            <person name="Venter J.C."/>
            <person name="White O.R."/>
            <person name="Whitty B.R."/>
            <person name="Youngman P."/>
            <person name="Wolfe K.H."/>
            <person name="Goldman G.H."/>
            <person name="Wortman J.R."/>
            <person name="Jiang B."/>
            <person name="Denning D.W."/>
            <person name="Nierman W.C."/>
        </authorList>
    </citation>
    <scope>NUCLEOTIDE SEQUENCE [LARGE SCALE GENOMIC DNA]</scope>
    <source>
        <strain>ATCC 1020 / DSM 3700 / CBS 544.65 / FGSC A1164 / JCM 1740 / NRRL 181 / WB 181</strain>
    </source>
</reference>